<protein>
    <recommendedName>
        <fullName>Sperm protamine P1</fullName>
    </recommendedName>
</protein>
<sequence>MARYRCCRSQSRSRCCRRRRRCRRRRRQRCRARRTAMRCCRRRYRRRCRRY</sequence>
<reference key="1">
    <citation type="submission" date="2000-08" db="EMBL/GenBank/DDBJ databases">
        <title>Molecular systematics of the langurs.</title>
        <authorList>
            <person name="Karanth P.K."/>
            <person name="Singh L."/>
            <person name="Stewart C.-B."/>
        </authorList>
    </citation>
    <scope>NUCLEOTIDE SEQUENCE [GENOMIC DNA]</scope>
</reference>
<dbReference type="EMBL" id="AF294850">
    <property type="protein sequence ID" value="AAM68933.1"/>
    <property type="molecule type" value="Genomic_DNA"/>
</dbReference>
<dbReference type="GO" id="GO:0000786">
    <property type="term" value="C:nucleosome"/>
    <property type="evidence" value="ECO:0007669"/>
    <property type="project" value="UniProtKB-KW"/>
</dbReference>
<dbReference type="GO" id="GO:0005634">
    <property type="term" value="C:nucleus"/>
    <property type="evidence" value="ECO:0007669"/>
    <property type="project" value="UniProtKB-SubCell"/>
</dbReference>
<dbReference type="GO" id="GO:0003677">
    <property type="term" value="F:DNA binding"/>
    <property type="evidence" value="ECO:0007669"/>
    <property type="project" value="UniProtKB-KW"/>
</dbReference>
<dbReference type="GO" id="GO:0030261">
    <property type="term" value="P:chromosome condensation"/>
    <property type="evidence" value="ECO:0007669"/>
    <property type="project" value="UniProtKB-KW"/>
</dbReference>
<dbReference type="GO" id="GO:0035092">
    <property type="term" value="P:sperm DNA condensation"/>
    <property type="evidence" value="ECO:0007669"/>
    <property type="project" value="InterPro"/>
</dbReference>
<dbReference type="InterPro" id="IPR000221">
    <property type="entry name" value="Protamine_P1"/>
</dbReference>
<dbReference type="Pfam" id="PF00260">
    <property type="entry name" value="Protamine_P1"/>
    <property type="match status" value="1"/>
</dbReference>
<dbReference type="PROSITE" id="PS00048">
    <property type="entry name" value="PROTAMINE_P1"/>
    <property type="match status" value="1"/>
</dbReference>
<gene>
    <name type="primary">PRM1</name>
</gene>
<feature type="chain" id="PRO_0000191456" description="Sperm protamine P1">
    <location>
        <begin position="1"/>
        <end position="51"/>
    </location>
</feature>
<keyword id="KW-0158">Chromosome</keyword>
<keyword id="KW-0217">Developmental protein</keyword>
<keyword id="KW-0221">Differentiation</keyword>
<keyword id="KW-0226">DNA condensation</keyword>
<keyword id="KW-0238">DNA-binding</keyword>
<keyword id="KW-0544">Nucleosome core</keyword>
<keyword id="KW-0539">Nucleus</keyword>
<keyword id="KW-0744">Spermatogenesis</keyword>
<proteinExistence type="evidence at transcript level"/>
<organism>
    <name type="scientific">Piliocolobus badius</name>
    <name type="common">Western red colobus</name>
    <name type="synonym">Procolobus badius</name>
    <dbReference type="NCBI Taxonomy" id="164648"/>
    <lineage>
        <taxon>Eukaryota</taxon>
        <taxon>Metazoa</taxon>
        <taxon>Chordata</taxon>
        <taxon>Craniata</taxon>
        <taxon>Vertebrata</taxon>
        <taxon>Euteleostomi</taxon>
        <taxon>Mammalia</taxon>
        <taxon>Eutheria</taxon>
        <taxon>Euarchontoglires</taxon>
        <taxon>Primates</taxon>
        <taxon>Haplorrhini</taxon>
        <taxon>Catarrhini</taxon>
        <taxon>Cercopithecidae</taxon>
        <taxon>Colobinae</taxon>
        <taxon>Piliocolobus</taxon>
    </lineage>
</organism>
<evidence type="ECO:0000250" key="1"/>
<evidence type="ECO:0000305" key="2"/>
<accession>Q8MJT0</accession>
<name>HSP1_PILBA</name>
<comment type="function">
    <text evidence="1">Protamines substitute for histones in the chromatin of sperm during the haploid phase of spermatogenesis. They compact sperm DNA into a highly condensed, stable and inactive complex (By similarity).</text>
</comment>
<comment type="subcellular location">
    <subcellularLocation>
        <location evidence="1">Nucleus</location>
    </subcellularLocation>
    <subcellularLocation>
        <location evidence="1">Chromosome</location>
    </subcellularLocation>
</comment>
<comment type="tissue specificity">
    <text>Testis.</text>
</comment>
<comment type="similarity">
    <text evidence="2">Belongs to the protamine P1 family.</text>
</comment>